<name>DDA1_DANRE</name>
<proteinExistence type="inferred from homology"/>
<accession>Q7T2A3</accession>
<organism>
    <name type="scientific">Danio rerio</name>
    <name type="common">Zebrafish</name>
    <name type="synonym">Brachydanio rerio</name>
    <dbReference type="NCBI Taxonomy" id="7955"/>
    <lineage>
        <taxon>Eukaryota</taxon>
        <taxon>Metazoa</taxon>
        <taxon>Chordata</taxon>
        <taxon>Craniata</taxon>
        <taxon>Vertebrata</taxon>
        <taxon>Euteleostomi</taxon>
        <taxon>Actinopterygii</taxon>
        <taxon>Neopterygii</taxon>
        <taxon>Teleostei</taxon>
        <taxon>Ostariophysi</taxon>
        <taxon>Cypriniformes</taxon>
        <taxon>Danionidae</taxon>
        <taxon>Danioninae</taxon>
        <taxon>Danio</taxon>
    </lineage>
</organism>
<sequence>MDKADFLKGLPVYNKTNFSRFHADSVCKASNRRPSVYLPTREYPSEQIIVTEKTNILLRYLHQQWDKKNAAKKREQEQAEGEGGSPAPPRKIARTDSQEMNEDS</sequence>
<reference key="1">
    <citation type="submission" date="2003-07" db="EMBL/GenBank/DDBJ databases">
        <authorList>
            <consortium name="NIH - Zebrafish Gene Collection (ZGC) project"/>
        </authorList>
    </citation>
    <scope>NUCLEOTIDE SEQUENCE [LARGE SCALE MRNA]</scope>
    <source>
        <tissue>Kidney</tissue>
    </source>
</reference>
<keyword id="KW-1185">Reference proteome</keyword>
<keyword id="KW-0833">Ubl conjugation pathway</keyword>
<feature type="chain" id="PRO_0000310274" description="DET1- and DDB1-associated protein 1">
    <location>
        <begin position="1"/>
        <end position="104"/>
    </location>
</feature>
<feature type="region of interest" description="Disordered" evidence="2">
    <location>
        <begin position="67"/>
        <end position="104"/>
    </location>
</feature>
<feature type="compositionally biased region" description="Basic and acidic residues" evidence="2">
    <location>
        <begin position="67"/>
        <end position="77"/>
    </location>
</feature>
<dbReference type="EMBL" id="BC054628">
    <property type="protein sequence ID" value="AAH54628.1"/>
    <property type="molecule type" value="mRNA"/>
</dbReference>
<dbReference type="RefSeq" id="NP_998292.1">
    <property type="nucleotide sequence ID" value="NM_213127.1"/>
</dbReference>
<dbReference type="RefSeq" id="XP_005155757.1">
    <property type="nucleotide sequence ID" value="XM_005155700.5"/>
</dbReference>
<dbReference type="SMR" id="Q7T2A3"/>
<dbReference type="FunCoup" id="Q7T2A3">
    <property type="interactions" value="1586"/>
</dbReference>
<dbReference type="STRING" id="7955.ENSDARP00000112315"/>
<dbReference type="PaxDb" id="7955-ENSDARP00000112315"/>
<dbReference type="Ensembl" id="ENSDART00000123601">
    <property type="protein sequence ID" value="ENSDARP00000112315"/>
    <property type="gene ID" value="ENSDARG00000076074"/>
</dbReference>
<dbReference type="Ensembl" id="ENSDART00000140960">
    <property type="protein sequence ID" value="ENSDARP00000119610"/>
    <property type="gene ID" value="ENSDARG00000076074"/>
</dbReference>
<dbReference type="GeneID" id="796589"/>
<dbReference type="KEGG" id="dre:796589"/>
<dbReference type="AGR" id="ZFIN:ZDB-GENE-040426-2137"/>
<dbReference type="CTD" id="79016"/>
<dbReference type="ZFIN" id="ZDB-GENE-040426-2137">
    <property type="gene designation" value="dda1"/>
</dbReference>
<dbReference type="eggNOG" id="KOG4816">
    <property type="taxonomic scope" value="Eukaryota"/>
</dbReference>
<dbReference type="HOGENOM" id="CLU_144562_1_0_1"/>
<dbReference type="InParanoid" id="Q7T2A3"/>
<dbReference type="OMA" id="RYLHQHW"/>
<dbReference type="OrthoDB" id="8598182at2759"/>
<dbReference type="PhylomeDB" id="Q7T2A3"/>
<dbReference type="TreeFam" id="TF323534"/>
<dbReference type="Reactome" id="R-DRE-8951664">
    <property type="pathway name" value="Neddylation"/>
</dbReference>
<dbReference type="UniPathway" id="UPA00143"/>
<dbReference type="PRO" id="PR:Q7T2A3"/>
<dbReference type="Proteomes" id="UP000000437">
    <property type="component" value="Alternate scaffold 11"/>
</dbReference>
<dbReference type="Proteomes" id="UP000000437">
    <property type="component" value="Chromosome 11"/>
</dbReference>
<dbReference type="Bgee" id="ENSDARG00000076074">
    <property type="expression patterns" value="Expressed in somite and 29 other cell types or tissues"/>
</dbReference>
<dbReference type="ExpressionAtlas" id="Q7T2A3">
    <property type="expression patterns" value="baseline and differential"/>
</dbReference>
<dbReference type="GO" id="GO:0080008">
    <property type="term" value="C:Cul4-RING E3 ubiquitin ligase complex"/>
    <property type="evidence" value="ECO:0000250"/>
    <property type="project" value="UniProtKB"/>
</dbReference>
<dbReference type="GO" id="GO:0032436">
    <property type="term" value="P:positive regulation of proteasomal ubiquitin-dependent protein catabolic process"/>
    <property type="evidence" value="ECO:0000318"/>
    <property type="project" value="GO_Central"/>
</dbReference>
<dbReference type="GO" id="GO:0000209">
    <property type="term" value="P:protein polyubiquitination"/>
    <property type="evidence" value="ECO:0000250"/>
    <property type="project" value="UniProtKB"/>
</dbReference>
<dbReference type="InterPro" id="IPR033575">
    <property type="entry name" value="DDA1-like"/>
</dbReference>
<dbReference type="InterPro" id="IPR018276">
    <property type="entry name" value="DDA1_dom"/>
</dbReference>
<dbReference type="PANTHER" id="PTHR31879">
    <property type="entry name" value="DET1- AND DDB1-ASSOCIATED PROTEIN 1"/>
    <property type="match status" value="1"/>
</dbReference>
<dbReference type="PANTHER" id="PTHR31879:SF2">
    <property type="entry name" value="DET1- AND DDB1-ASSOCIATED PROTEIN 1"/>
    <property type="match status" value="1"/>
</dbReference>
<dbReference type="Pfam" id="PF10172">
    <property type="entry name" value="DDA1"/>
    <property type="match status" value="1"/>
</dbReference>
<comment type="function">
    <text evidence="1">Functions as a component of numerous distinct DCX (DDB1-CUL4-X-box) E3 ubiquitin-protein ligase complexes which mediate the ubiquitination and subsequent proteasomal degradation of target proteins. In the DCX complexes, acts as a scaffolding subunit required to stabilize the complex.</text>
</comment>
<comment type="pathway">
    <text evidence="1">Protein modification; protein ubiquitination.</text>
</comment>
<comment type="subunit">
    <text evidence="1">Component of numerous DCX (DDB1-CUL4-X-box) E3 ubiquitin-protein ligase complexes which consist of a core of DDB1, cullin-4 (CUL4A or CUL4B), DDA1 and RBX1.</text>
</comment>
<comment type="similarity">
    <text evidence="3">Belongs to the DDA1 family.</text>
</comment>
<gene>
    <name evidence="1" type="primary">dda1</name>
    <name type="ORF">zgc:64154</name>
</gene>
<evidence type="ECO:0000250" key="1">
    <source>
        <dbReference type="UniProtKB" id="Q9BW61"/>
    </source>
</evidence>
<evidence type="ECO:0000256" key="2">
    <source>
        <dbReference type="SAM" id="MobiDB-lite"/>
    </source>
</evidence>
<evidence type="ECO:0000305" key="3"/>
<protein>
    <recommendedName>
        <fullName evidence="1">DET1- and DDB1-associated protein 1</fullName>
    </recommendedName>
</protein>